<proteinExistence type="inferred from homology"/>
<gene>
    <name evidence="1" type="primary">rplE</name>
    <name type="ordered locus">C8J_1599</name>
</gene>
<name>RL5_CAMJ8</name>
<sequence length="181" mass="20214">MMRLKEKYNQSIKPALVKEFDIKNPMLIPVIEKVVISVGAGELAKDQKVLQNVADTISLIAGQKAVITKAKKSVAGFKVREGFPVGVMVTLRKENMYAFLDKLISIALPRVKDFRGLSRDGFDGRGNYNFGLDEQLMFPEVEYDKILRTHGMNISIVTTAQNDKQAQKLLELIGVPFTKGK</sequence>
<keyword id="KW-0687">Ribonucleoprotein</keyword>
<keyword id="KW-0689">Ribosomal protein</keyword>
<keyword id="KW-0694">RNA-binding</keyword>
<keyword id="KW-0699">rRNA-binding</keyword>
<keyword id="KW-0820">tRNA-binding</keyword>
<organism>
    <name type="scientific">Campylobacter jejuni subsp. jejuni serotype O:6 (strain 81116 / NCTC 11828)</name>
    <dbReference type="NCBI Taxonomy" id="407148"/>
    <lineage>
        <taxon>Bacteria</taxon>
        <taxon>Pseudomonadati</taxon>
        <taxon>Campylobacterota</taxon>
        <taxon>Epsilonproteobacteria</taxon>
        <taxon>Campylobacterales</taxon>
        <taxon>Campylobacteraceae</taxon>
        <taxon>Campylobacter</taxon>
    </lineage>
</organism>
<comment type="function">
    <text evidence="1">This is one of the proteins that bind and probably mediate the attachment of the 5S RNA into the large ribosomal subunit, where it forms part of the central protuberance. In the 70S ribosome it contacts protein S13 of the 30S subunit (bridge B1b), connecting the 2 subunits; this bridge is implicated in subunit movement. Contacts the P site tRNA; the 5S rRNA and some of its associated proteins might help stabilize positioning of ribosome-bound tRNAs.</text>
</comment>
<comment type="subunit">
    <text evidence="1">Part of the 50S ribosomal subunit; part of the 5S rRNA/L5/L18/L25 subcomplex. Contacts the 5S rRNA and the P site tRNA. Forms a bridge to the 30S subunit in the 70S ribosome.</text>
</comment>
<comment type="similarity">
    <text evidence="1">Belongs to the universal ribosomal protein uL5 family.</text>
</comment>
<evidence type="ECO:0000255" key="1">
    <source>
        <dbReference type="HAMAP-Rule" id="MF_01333"/>
    </source>
</evidence>
<evidence type="ECO:0000305" key="2"/>
<accession>A8FP09</accession>
<dbReference type="EMBL" id="CP000814">
    <property type="protein sequence ID" value="ABV53196.1"/>
    <property type="molecule type" value="Genomic_DNA"/>
</dbReference>
<dbReference type="RefSeq" id="WP_002851453.1">
    <property type="nucleotide sequence ID" value="NC_009839.1"/>
</dbReference>
<dbReference type="SMR" id="A8FP09"/>
<dbReference type="KEGG" id="cju:C8J_1599"/>
<dbReference type="HOGENOM" id="CLU_061015_2_1_7"/>
<dbReference type="GO" id="GO:1990904">
    <property type="term" value="C:ribonucleoprotein complex"/>
    <property type="evidence" value="ECO:0007669"/>
    <property type="project" value="UniProtKB-KW"/>
</dbReference>
<dbReference type="GO" id="GO:0005840">
    <property type="term" value="C:ribosome"/>
    <property type="evidence" value="ECO:0007669"/>
    <property type="project" value="UniProtKB-KW"/>
</dbReference>
<dbReference type="GO" id="GO:0019843">
    <property type="term" value="F:rRNA binding"/>
    <property type="evidence" value="ECO:0007669"/>
    <property type="project" value="UniProtKB-UniRule"/>
</dbReference>
<dbReference type="GO" id="GO:0003735">
    <property type="term" value="F:structural constituent of ribosome"/>
    <property type="evidence" value="ECO:0007669"/>
    <property type="project" value="InterPro"/>
</dbReference>
<dbReference type="GO" id="GO:0000049">
    <property type="term" value="F:tRNA binding"/>
    <property type="evidence" value="ECO:0007669"/>
    <property type="project" value="UniProtKB-UniRule"/>
</dbReference>
<dbReference type="GO" id="GO:0006412">
    <property type="term" value="P:translation"/>
    <property type="evidence" value="ECO:0007669"/>
    <property type="project" value="UniProtKB-UniRule"/>
</dbReference>
<dbReference type="FunFam" id="3.30.1440.10:FF:000001">
    <property type="entry name" value="50S ribosomal protein L5"/>
    <property type="match status" value="1"/>
</dbReference>
<dbReference type="Gene3D" id="3.30.1440.10">
    <property type="match status" value="1"/>
</dbReference>
<dbReference type="HAMAP" id="MF_01333_B">
    <property type="entry name" value="Ribosomal_uL5_B"/>
    <property type="match status" value="1"/>
</dbReference>
<dbReference type="InterPro" id="IPR002132">
    <property type="entry name" value="Ribosomal_uL5"/>
</dbReference>
<dbReference type="InterPro" id="IPR020930">
    <property type="entry name" value="Ribosomal_uL5_bac-type"/>
</dbReference>
<dbReference type="InterPro" id="IPR031309">
    <property type="entry name" value="Ribosomal_uL5_C"/>
</dbReference>
<dbReference type="InterPro" id="IPR020929">
    <property type="entry name" value="Ribosomal_uL5_CS"/>
</dbReference>
<dbReference type="InterPro" id="IPR022803">
    <property type="entry name" value="Ribosomal_uL5_dom_sf"/>
</dbReference>
<dbReference type="InterPro" id="IPR031310">
    <property type="entry name" value="Ribosomal_uL5_N"/>
</dbReference>
<dbReference type="NCBIfam" id="NF000585">
    <property type="entry name" value="PRK00010.1"/>
    <property type="match status" value="1"/>
</dbReference>
<dbReference type="PANTHER" id="PTHR11994">
    <property type="entry name" value="60S RIBOSOMAL PROTEIN L11-RELATED"/>
    <property type="match status" value="1"/>
</dbReference>
<dbReference type="Pfam" id="PF00281">
    <property type="entry name" value="Ribosomal_L5"/>
    <property type="match status" value="1"/>
</dbReference>
<dbReference type="Pfam" id="PF00673">
    <property type="entry name" value="Ribosomal_L5_C"/>
    <property type="match status" value="1"/>
</dbReference>
<dbReference type="PIRSF" id="PIRSF002161">
    <property type="entry name" value="Ribosomal_L5"/>
    <property type="match status" value="1"/>
</dbReference>
<dbReference type="SUPFAM" id="SSF55282">
    <property type="entry name" value="RL5-like"/>
    <property type="match status" value="1"/>
</dbReference>
<dbReference type="PROSITE" id="PS00358">
    <property type="entry name" value="RIBOSOMAL_L5"/>
    <property type="match status" value="1"/>
</dbReference>
<reference key="1">
    <citation type="journal article" date="2007" name="J. Bacteriol.">
        <title>The complete genome sequence of Campylobacter jejuni strain 81116 (NCTC11828).</title>
        <authorList>
            <person name="Pearson B.M."/>
            <person name="Gaskin D.J.H."/>
            <person name="Segers R.P.A.M."/>
            <person name="Wells J.M."/>
            <person name="Nuijten P.J.M."/>
            <person name="van Vliet A.H.M."/>
        </authorList>
    </citation>
    <scope>NUCLEOTIDE SEQUENCE [LARGE SCALE GENOMIC DNA]</scope>
    <source>
        <strain>81116 / NCTC 11828</strain>
    </source>
</reference>
<feature type="chain" id="PRO_1000073285" description="Large ribosomal subunit protein uL5">
    <location>
        <begin position="1"/>
        <end position="181"/>
    </location>
</feature>
<protein>
    <recommendedName>
        <fullName evidence="1">Large ribosomal subunit protein uL5</fullName>
    </recommendedName>
    <alternativeName>
        <fullName evidence="2">50S ribosomal protein L5</fullName>
    </alternativeName>
</protein>